<feature type="chain" id="PRO_0000432081" description="Immunity protein CdiI">
    <location>
        <begin position="1"/>
        <end position="77"/>
    </location>
</feature>
<feature type="transmembrane region" description="Helical; Name=1" evidence="1">
    <location>
        <begin position="8"/>
        <end position="28"/>
    </location>
</feature>
<feature type="transmembrane region" description="Helical; Name=2" evidence="1">
    <location>
        <begin position="54"/>
        <end position="74"/>
    </location>
</feature>
<reference key="1">
    <citation type="journal article" date="2001" name="Nature">
        <title>Genome sequence of Yersinia pestis, the causative agent of plague.</title>
        <authorList>
            <person name="Parkhill J."/>
            <person name="Wren B.W."/>
            <person name="Thomson N.R."/>
            <person name="Titball R.W."/>
            <person name="Holden M.T.G."/>
            <person name="Prentice M.B."/>
            <person name="Sebaihia M."/>
            <person name="James K.D."/>
            <person name="Churcher C.M."/>
            <person name="Mungall K.L."/>
            <person name="Baker S."/>
            <person name="Basham D."/>
            <person name="Bentley S.D."/>
            <person name="Brooks K."/>
            <person name="Cerdeno-Tarraga A.-M."/>
            <person name="Chillingworth T."/>
            <person name="Cronin A."/>
            <person name="Davies R.M."/>
            <person name="Davis P."/>
            <person name="Dougan G."/>
            <person name="Feltwell T."/>
            <person name="Hamlin N."/>
            <person name="Holroyd S."/>
            <person name="Jagels K."/>
            <person name="Karlyshev A.V."/>
            <person name="Leather S."/>
            <person name="Moule S."/>
            <person name="Oyston P.C.F."/>
            <person name="Quail M.A."/>
            <person name="Rutherford K.M."/>
            <person name="Simmonds M."/>
            <person name="Skelton J."/>
            <person name="Stevens K."/>
            <person name="Whitehead S."/>
            <person name="Barrell B.G."/>
        </authorList>
    </citation>
    <scope>NUCLEOTIDE SEQUENCE [LARGE SCALE GENOMIC DNA]</scope>
    <source>
        <strain>CO-92 / Biovar Orientalis</strain>
    </source>
</reference>
<reference key="2">
    <citation type="journal article" date="2004" name="DNA Res.">
        <title>Complete genome sequence of Yersinia pestis strain 91001, an isolate avirulent to humans.</title>
        <authorList>
            <person name="Song Y."/>
            <person name="Tong Z."/>
            <person name="Wang J."/>
            <person name="Wang L."/>
            <person name="Guo Z."/>
            <person name="Han Y."/>
            <person name="Zhang J."/>
            <person name="Pei D."/>
            <person name="Zhou D."/>
            <person name="Qin H."/>
            <person name="Pang X."/>
            <person name="Han Y."/>
            <person name="Zhai J."/>
            <person name="Li M."/>
            <person name="Cui B."/>
            <person name="Qi Z."/>
            <person name="Jin L."/>
            <person name="Dai R."/>
            <person name="Chen F."/>
            <person name="Li S."/>
            <person name="Ye C."/>
            <person name="Du Z."/>
            <person name="Lin W."/>
            <person name="Wang J."/>
            <person name="Yu J."/>
            <person name="Yang H."/>
            <person name="Wang J."/>
            <person name="Huang P."/>
            <person name="Yang R."/>
        </authorList>
    </citation>
    <scope>NUCLEOTIDE SEQUENCE [LARGE SCALE GENOMIC DNA]</scope>
    <source>
        <strain>91001 / Biovar Mediaevalis</strain>
    </source>
</reference>
<reference key="3">
    <citation type="submission" date="2014-07" db="EMBL/GenBank/DDBJ databases">
        <authorList>
            <person name="Bishop-Lilly K.A."/>
            <person name="Broomall S.M."/>
            <person name="Chain P.S."/>
            <person name="Chertkov O."/>
            <person name="Coyne S.R."/>
            <person name="Daligault H.E."/>
            <person name="Davenport K.W."/>
            <person name="Erkkila T."/>
            <person name="Frey K.G."/>
            <person name="Gibbons H.S."/>
            <person name="Gu W."/>
            <person name="Jaissle J."/>
            <person name="Johnson S.L."/>
            <person name="Koroleva G.I."/>
            <person name="Ladner J.T."/>
            <person name="Lo C.-C."/>
            <person name="Minogue T.D."/>
            <person name="Munk C."/>
            <person name="Palacios G.F."/>
            <person name="Redden C.L."/>
            <person name="Rosenzweig C.N."/>
            <person name="Scholz M.B."/>
            <person name="Teshima H."/>
            <person name="Xu Y."/>
        </authorList>
    </citation>
    <scope>NUCLEOTIDE SEQUENCE [LARGE SCALE GENOMIC DNA]</scope>
    <source>
        <strain>Colorado 92</strain>
    </source>
</reference>
<reference key="4">
    <citation type="journal article" date="2010" name="Nature">
        <title>A widespread family of polymorphic contact-dependent toxin delivery systems in bacteria.</title>
        <authorList>
            <person name="Aoki S.K."/>
            <person name="Diner E.J."/>
            <person name="de Roodenbeke C.T."/>
            <person name="Burgess B.R."/>
            <person name="Poole S.J."/>
            <person name="Braaten B.A."/>
            <person name="Jones A.M."/>
            <person name="Webb J.S."/>
            <person name="Hayes C.S."/>
            <person name="Cotter P.A."/>
            <person name="Low D.A."/>
        </authorList>
    </citation>
    <scope>FUNCTION</scope>
    <scope>STRAIN SPECIFICITY</scope>
    <source>
        <strain>CO-92 / Biovar Orientalis</strain>
    </source>
</reference>
<accession>Q74RU7</accession>
<dbReference type="EMBL" id="AE017042">
    <property type="protein sequence ID" value="AAS63101.1"/>
    <property type="molecule type" value="Genomic_DNA"/>
</dbReference>
<dbReference type="EMBL" id="AL590842">
    <property type="protein sequence ID" value="CAL19280.1"/>
    <property type="molecule type" value="Genomic_DNA"/>
</dbReference>
<dbReference type="EMBL" id="KN150725">
    <property type="protein sequence ID" value="KGA55204.1"/>
    <property type="molecule type" value="Genomic_DNA"/>
</dbReference>
<dbReference type="PIR" id="AF0074">
    <property type="entry name" value="AF0074"/>
</dbReference>
<dbReference type="RefSeq" id="WP_002214946.1">
    <property type="nucleotide sequence ID" value="NZ_WUCM01000136.1"/>
</dbReference>
<dbReference type="RefSeq" id="YP_002345672.1">
    <property type="nucleotide sequence ID" value="NC_003143.1"/>
</dbReference>
<dbReference type="SMR" id="Q74RU7"/>
<dbReference type="STRING" id="214092.YPO0600"/>
<dbReference type="PaxDb" id="214092-YPO0600"/>
<dbReference type="EnsemblBacteria" id="AAS63101">
    <property type="protein sequence ID" value="AAS63101"/>
    <property type="gene ID" value="YP_2920"/>
</dbReference>
<dbReference type="GeneID" id="57974017"/>
<dbReference type="KEGG" id="ype:YPO0600"/>
<dbReference type="KEGG" id="ypj:CH55_2210"/>
<dbReference type="KEGG" id="ypl:CH46_316"/>
<dbReference type="KEGG" id="ypm:YP_2920"/>
<dbReference type="KEGG" id="ypv:BZ15_2974"/>
<dbReference type="KEGG" id="ypw:CH59_1263"/>
<dbReference type="PATRIC" id="fig|214092.21.peg.856"/>
<dbReference type="eggNOG" id="ENOG502ZDHK">
    <property type="taxonomic scope" value="Bacteria"/>
</dbReference>
<dbReference type="HOGENOM" id="CLU_198306_0_0_6"/>
<dbReference type="OrthoDB" id="9962161at2"/>
<dbReference type="Proteomes" id="UP000000815">
    <property type="component" value="Chromosome"/>
</dbReference>
<dbReference type="Proteomes" id="UP000001019">
    <property type="component" value="Chromosome"/>
</dbReference>
<dbReference type="GO" id="GO:0016020">
    <property type="term" value="C:membrane"/>
    <property type="evidence" value="ECO:0007669"/>
    <property type="project" value="UniProtKB-SubCell"/>
</dbReference>
<protein>
    <recommendedName>
        <fullName evidence="3">Immunity protein CdiI</fullName>
    </recommendedName>
</protein>
<comment type="function">
    <text evidence="2">Immunity protein component of a toxin-immunity protein module, which functions as a cellular contact-dependent growth inhibition (CDI) system. CDI modules allow bacteria to communicate with and inhibit the growth of closely related neighboring bacteria in a contact-dependent fashion. Protects cells against the CDI activity of CdiA, its cognate toxin protein, but not against non-cognate CdiA from E.coli strains 563, EC93 or D.dadantii strain 3937.</text>
</comment>
<comment type="subunit">
    <text evidence="4">Probably interacts with cognate toxin CdiA.</text>
</comment>
<comment type="subcellular location">
    <subcellularLocation>
        <location evidence="1">Membrane</location>
        <topology evidence="1">Multi-pass membrane protein</topology>
    </subcellularLocation>
</comment>
<name>CDII_YERPE</name>
<organism>
    <name type="scientific">Yersinia pestis</name>
    <dbReference type="NCBI Taxonomy" id="632"/>
    <lineage>
        <taxon>Bacteria</taxon>
        <taxon>Pseudomonadati</taxon>
        <taxon>Pseudomonadota</taxon>
        <taxon>Gammaproteobacteria</taxon>
        <taxon>Enterobacterales</taxon>
        <taxon>Yersiniaceae</taxon>
        <taxon>Yersinia</taxon>
    </lineage>
</organism>
<keyword id="KW-0472">Membrane</keyword>
<keyword id="KW-1185">Reference proteome</keyword>
<keyword id="KW-0812">Transmembrane</keyword>
<keyword id="KW-1133">Transmembrane helix</keyword>
<gene>
    <name type="primary">cdiI</name>
    <name type="ordered locus">YPO0600</name>
    <name type="ordered locus">YP_2920</name>
    <name type="ORF">DJ56_3415</name>
</gene>
<proteinExistence type="inferred from homology"/>
<sequence length="77" mass="8719">MKNLLYVVLLMAVCILGLLIVGTIFYLFLEVFMYFYVNAPISLESFQFTRLLKMSIYGGGILGLGIGLLRIFKIKGF</sequence>
<evidence type="ECO:0000255" key="1"/>
<evidence type="ECO:0000269" key="2">
    <source>
    </source>
</evidence>
<evidence type="ECO:0000303" key="3">
    <source>
    </source>
</evidence>
<evidence type="ECO:0000305" key="4">
    <source>
    </source>
</evidence>